<gene>
    <name evidence="1" type="primary">fucI</name>
    <name type="ordered locus">ECP_2785</name>
</gene>
<feature type="chain" id="PRO_1000067219" description="L-fucose isomerase">
    <location>
        <begin position="1"/>
        <end position="591"/>
    </location>
</feature>
<feature type="active site" description="Proton acceptor" evidence="1">
    <location>
        <position position="337"/>
    </location>
</feature>
<feature type="active site" description="Proton acceptor" evidence="1">
    <location>
        <position position="361"/>
    </location>
</feature>
<feature type="binding site" evidence="1">
    <location>
        <position position="337"/>
    </location>
    <ligand>
        <name>Mn(2+)</name>
        <dbReference type="ChEBI" id="CHEBI:29035"/>
    </ligand>
</feature>
<feature type="binding site" evidence="1">
    <location>
        <position position="361"/>
    </location>
    <ligand>
        <name>Mn(2+)</name>
        <dbReference type="ChEBI" id="CHEBI:29035"/>
    </ligand>
</feature>
<feature type="binding site" evidence="1">
    <location>
        <position position="528"/>
    </location>
    <ligand>
        <name>Mn(2+)</name>
        <dbReference type="ChEBI" id="CHEBI:29035"/>
    </ligand>
</feature>
<protein>
    <recommendedName>
        <fullName evidence="1">L-fucose isomerase</fullName>
        <ecNumber evidence="1">5.3.1.25</ecNumber>
    </recommendedName>
    <alternativeName>
        <fullName evidence="1">6-deoxy-L-galactose isomerase</fullName>
    </alternativeName>
    <alternativeName>
        <fullName>FucIase</fullName>
    </alternativeName>
</protein>
<proteinExistence type="inferred from homology"/>
<reference key="1">
    <citation type="journal article" date="2006" name="Mol. Microbiol.">
        <title>Role of pathogenicity island-associated integrases in the genome plasticity of uropathogenic Escherichia coli strain 536.</title>
        <authorList>
            <person name="Hochhut B."/>
            <person name="Wilde C."/>
            <person name="Balling G."/>
            <person name="Middendorf B."/>
            <person name="Dobrindt U."/>
            <person name="Brzuszkiewicz E."/>
            <person name="Gottschalk G."/>
            <person name="Carniel E."/>
            <person name="Hacker J."/>
        </authorList>
    </citation>
    <scope>NUCLEOTIDE SEQUENCE [LARGE SCALE GENOMIC DNA]</scope>
    <source>
        <strain>536 / UPEC</strain>
    </source>
</reference>
<evidence type="ECO:0000255" key="1">
    <source>
        <dbReference type="HAMAP-Rule" id="MF_01254"/>
    </source>
</evidence>
<accession>Q0TE57</accession>
<dbReference type="EC" id="5.3.1.25" evidence="1"/>
<dbReference type="EMBL" id="CP000247">
    <property type="protein sequence ID" value="ABG70772.1"/>
    <property type="molecule type" value="Genomic_DNA"/>
</dbReference>
<dbReference type="RefSeq" id="WP_000724159.1">
    <property type="nucleotide sequence ID" value="NC_008253.1"/>
</dbReference>
<dbReference type="SMR" id="Q0TE57"/>
<dbReference type="KEGG" id="ecp:ECP_2785"/>
<dbReference type="HOGENOM" id="CLU_033326_1_0_6"/>
<dbReference type="UniPathway" id="UPA00563">
    <property type="reaction ID" value="UER00624"/>
</dbReference>
<dbReference type="Proteomes" id="UP000009182">
    <property type="component" value="Chromosome"/>
</dbReference>
<dbReference type="GO" id="GO:0005737">
    <property type="term" value="C:cytoplasm"/>
    <property type="evidence" value="ECO:0007669"/>
    <property type="project" value="UniProtKB-SubCell"/>
</dbReference>
<dbReference type="GO" id="GO:0008790">
    <property type="term" value="F:arabinose isomerase activity"/>
    <property type="evidence" value="ECO:0007669"/>
    <property type="project" value="TreeGrafter"/>
</dbReference>
<dbReference type="GO" id="GO:0008736">
    <property type="term" value="F:L-fucose isomerase activity"/>
    <property type="evidence" value="ECO:0007669"/>
    <property type="project" value="UniProtKB-UniRule"/>
</dbReference>
<dbReference type="GO" id="GO:0030145">
    <property type="term" value="F:manganese ion binding"/>
    <property type="evidence" value="ECO:0007669"/>
    <property type="project" value="UniProtKB-UniRule"/>
</dbReference>
<dbReference type="GO" id="GO:0019571">
    <property type="term" value="P:D-arabinose catabolic process"/>
    <property type="evidence" value="ECO:0007669"/>
    <property type="project" value="TreeGrafter"/>
</dbReference>
<dbReference type="GO" id="GO:0042355">
    <property type="term" value="P:L-fucose catabolic process"/>
    <property type="evidence" value="ECO:0007669"/>
    <property type="project" value="UniProtKB-UniRule"/>
</dbReference>
<dbReference type="CDD" id="cd03556">
    <property type="entry name" value="L-fucose_isomerase"/>
    <property type="match status" value="1"/>
</dbReference>
<dbReference type="FunFam" id="3.20.14.10:FF:000001">
    <property type="entry name" value="L-fucose isomerase"/>
    <property type="match status" value="1"/>
</dbReference>
<dbReference type="FunFam" id="3.40.275.10:FF:000001">
    <property type="entry name" value="L-fucose isomerase"/>
    <property type="match status" value="1"/>
</dbReference>
<dbReference type="FunFam" id="3.40.50.1070:FF:000001">
    <property type="entry name" value="L-fucose isomerase"/>
    <property type="match status" value="1"/>
</dbReference>
<dbReference type="Gene3D" id="3.40.50.1070">
    <property type="match status" value="1"/>
</dbReference>
<dbReference type="Gene3D" id="3.40.275.10">
    <property type="entry name" value="L-fucose Isomerase, Chain A, domain 2"/>
    <property type="match status" value="1"/>
</dbReference>
<dbReference type="Gene3D" id="3.20.14.10">
    <property type="entry name" value="L-fucose/L-arabinose isomerase, C-terminal"/>
    <property type="match status" value="1"/>
</dbReference>
<dbReference type="HAMAP" id="MF_01254">
    <property type="entry name" value="Fucose_iso"/>
    <property type="match status" value="1"/>
</dbReference>
<dbReference type="InterPro" id="IPR004216">
    <property type="entry name" value="Fuc/Ara_isomerase_C"/>
</dbReference>
<dbReference type="InterPro" id="IPR038393">
    <property type="entry name" value="Fuc_iso_dom3_sf"/>
</dbReference>
<dbReference type="InterPro" id="IPR015888">
    <property type="entry name" value="Fuc_isomerase_C"/>
</dbReference>
<dbReference type="InterPro" id="IPR038391">
    <property type="entry name" value="Fucose_iso_dom1_sf"/>
</dbReference>
<dbReference type="InterPro" id="IPR012888">
    <property type="entry name" value="Fucose_iso_N1"/>
</dbReference>
<dbReference type="InterPro" id="IPR005763">
    <property type="entry name" value="Fucose_isomerase"/>
</dbReference>
<dbReference type="InterPro" id="IPR038392">
    <property type="entry name" value="Fucose_isomerase_dom2_sf"/>
</dbReference>
<dbReference type="InterPro" id="IPR009015">
    <property type="entry name" value="Fucose_isomerase_N/cen_sf"/>
</dbReference>
<dbReference type="InterPro" id="IPR012889">
    <property type="entry name" value="Fucose_isomerase_N2"/>
</dbReference>
<dbReference type="NCBIfam" id="TIGR01089">
    <property type="entry name" value="fucI"/>
    <property type="match status" value="1"/>
</dbReference>
<dbReference type="NCBIfam" id="NF008220">
    <property type="entry name" value="PRK10991.1"/>
    <property type="match status" value="1"/>
</dbReference>
<dbReference type="PANTHER" id="PTHR37840">
    <property type="entry name" value="L-FUCOSE ISOMERASE"/>
    <property type="match status" value="1"/>
</dbReference>
<dbReference type="PANTHER" id="PTHR37840:SF1">
    <property type="entry name" value="L-FUCOSE ISOMERASE"/>
    <property type="match status" value="1"/>
</dbReference>
<dbReference type="Pfam" id="PF02952">
    <property type="entry name" value="Fucose_iso_C"/>
    <property type="match status" value="1"/>
</dbReference>
<dbReference type="Pfam" id="PF07881">
    <property type="entry name" value="Fucose_iso_N1"/>
    <property type="match status" value="1"/>
</dbReference>
<dbReference type="Pfam" id="PF07882">
    <property type="entry name" value="Fucose_iso_N2"/>
    <property type="match status" value="1"/>
</dbReference>
<dbReference type="SUPFAM" id="SSF50443">
    <property type="entry name" value="FucI/AraA C-terminal domain-like"/>
    <property type="match status" value="1"/>
</dbReference>
<dbReference type="SUPFAM" id="SSF53743">
    <property type="entry name" value="FucI/AraA N-terminal and middle domains"/>
    <property type="match status" value="1"/>
</dbReference>
<sequence length="591" mass="65004">MKKISLPKIGIRPVIDGRRMGVRESLEEQTMNMAKATAALLTEKLRHACGAAVECVISDTCIAGMAEAAACEEKFSSQNVGLTITVTPCWCYGSETIDMDPTRPKAIWGFNGTERPGAVYLAAALAAHSQKGIPAFSIYGHDVQDADDTSIPADVEEKLLRFARAGLAVASMKGKSYLSLGGVSMGIAGSIVDHNFFESWLGMKVQAVDMTELRRRIDQKIYDEAELEMALAWADKNFRYGEDENNKQYQRNAEQSRAVLRESLLMAMCIRDMMQGNSKLADIGRVEESLGYNAIAAGFQGQRHWTDQYPNGDTAEAILNSSFDWNGVRKPFVVATENDSLNGVAMLMGHQLTGTAQIFADVRTYWSPEAIERVTGHKLDGLAEHGIIHLINSGSAALDGSCKQRDSEGKPTMKPHWEISQQEADACLAATEWCPAIHEYFRGGGYSSRFLTEGGVPFTMTRVNIIKGLGPVLQIAEGWSVELPKDVHDILNKRTNSTWPTTWFAPRLTGKGPFTDVYSVMANWGANHGVLTIGHVGADFITLASMLRIPVCMHNVEETKVYRPSAWAAHGMDIEGQDYRACQNYGPLYKR</sequence>
<keyword id="KW-0119">Carbohydrate metabolism</keyword>
<keyword id="KW-0963">Cytoplasm</keyword>
<keyword id="KW-0294">Fucose metabolism</keyword>
<keyword id="KW-0413">Isomerase</keyword>
<keyword id="KW-0464">Manganese</keyword>
<keyword id="KW-0479">Metal-binding</keyword>
<organism>
    <name type="scientific">Escherichia coli O6:K15:H31 (strain 536 / UPEC)</name>
    <dbReference type="NCBI Taxonomy" id="362663"/>
    <lineage>
        <taxon>Bacteria</taxon>
        <taxon>Pseudomonadati</taxon>
        <taxon>Pseudomonadota</taxon>
        <taxon>Gammaproteobacteria</taxon>
        <taxon>Enterobacterales</taxon>
        <taxon>Enterobacteriaceae</taxon>
        <taxon>Escherichia</taxon>
    </lineage>
</organism>
<name>FUCI_ECOL5</name>
<comment type="function">
    <text evidence="1">Converts the aldose L-fucose into the corresponding ketose L-fuculose.</text>
</comment>
<comment type="catalytic activity">
    <reaction evidence="1">
        <text>L-fucose = L-fuculose</text>
        <dbReference type="Rhea" id="RHEA:17233"/>
        <dbReference type="ChEBI" id="CHEBI:2181"/>
        <dbReference type="ChEBI" id="CHEBI:17617"/>
        <dbReference type="EC" id="5.3.1.25"/>
    </reaction>
</comment>
<comment type="cofactor">
    <cofactor evidence="1">
        <name>Mn(2+)</name>
        <dbReference type="ChEBI" id="CHEBI:29035"/>
    </cofactor>
</comment>
<comment type="pathway">
    <text evidence="1">Carbohydrate degradation; L-fucose degradation; L-lactaldehyde and glycerone phosphate from L-fucose: step 1/3.</text>
</comment>
<comment type="subunit">
    <text evidence="1">Homohexamer.</text>
</comment>
<comment type="subcellular location">
    <subcellularLocation>
        <location evidence="1">Cytoplasm</location>
    </subcellularLocation>
</comment>
<comment type="similarity">
    <text evidence="1">Belongs to the L-fucose isomerase family.</text>
</comment>